<reference key="1">
    <citation type="journal article" date="2007" name="PLoS Genet.">
        <title>A tale of two oxidation states: bacterial colonization of arsenic-rich environments.</title>
        <authorList>
            <person name="Muller D."/>
            <person name="Medigue C."/>
            <person name="Koechler S."/>
            <person name="Barbe V."/>
            <person name="Barakat M."/>
            <person name="Talla E."/>
            <person name="Bonnefoy V."/>
            <person name="Krin E."/>
            <person name="Arsene-Ploetze F."/>
            <person name="Carapito C."/>
            <person name="Chandler M."/>
            <person name="Cournoyer B."/>
            <person name="Cruveiller S."/>
            <person name="Dossat C."/>
            <person name="Duval S."/>
            <person name="Heymann M."/>
            <person name="Leize E."/>
            <person name="Lieutaud A."/>
            <person name="Lievremont D."/>
            <person name="Makita Y."/>
            <person name="Mangenot S."/>
            <person name="Nitschke W."/>
            <person name="Ortet P."/>
            <person name="Perdrial N."/>
            <person name="Schoepp B."/>
            <person name="Siguier P."/>
            <person name="Simeonova D.D."/>
            <person name="Rouy Z."/>
            <person name="Segurens B."/>
            <person name="Turlin E."/>
            <person name="Vallenet D."/>
            <person name="van Dorsselaer A."/>
            <person name="Weiss S."/>
            <person name="Weissenbach J."/>
            <person name="Lett M.-C."/>
            <person name="Danchin A."/>
            <person name="Bertin P.N."/>
        </authorList>
    </citation>
    <scope>NUCLEOTIDE SEQUENCE [LARGE SCALE GENOMIC DNA]</scope>
    <source>
        <strain>ULPAs1</strain>
    </source>
</reference>
<feature type="chain" id="PRO_0000331838" description="Methionine--tRNA ligase">
    <location>
        <begin position="1"/>
        <end position="710"/>
    </location>
</feature>
<feature type="domain" description="tRNA-binding" evidence="1">
    <location>
        <begin position="604"/>
        <end position="710"/>
    </location>
</feature>
<feature type="short sequence motif" description="'HIGH' region">
    <location>
        <begin position="16"/>
        <end position="26"/>
    </location>
</feature>
<feature type="short sequence motif" description="'KMSKS' region">
    <location>
        <begin position="350"/>
        <end position="354"/>
    </location>
</feature>
<feature type="binding site" evidence="1">
    <location>
        <position position="147"/>
    </location>
    <ligand>
        <name>Zn(2+)</name>
        <dbReference type="ChEBI" id="CHEBI:29105"/>
    </ligand>
</feature>
<feature type="binding site" evidence="1">
    <location>
        <position position="150"/>
    </location>
    <ligand>
        <name>Zn(2+)</name>
        <dbReference type="ChEBI" id="CHEBI:29105"/>
    </ligand>
</feature>
<feature type="binding site" evidence="1">
    <location>
        <position position="160"/>
    </location>
    <ligand>
        <name>Zn(2+)</name>
        <dbReference type="ChEBI" id="CHEBI:29105"/>
    </ligand>
</feature>
<feature type="binding site" evidence="1">
    <location>
        <position position="163"/>
    </location>
    <ligand>
        <name>Zn(2+)</name>
        <dbReference type="ChEBI" id="CHEBI:29105"/>
    </ligand>
</feature>
<feature type="binding site" evidence="1">
    <location>
        <position position="353"/>
    </location>
    <ligand>
        <name>ATP</name>
        <dbReference type="ChEBI" id="CHEBI:30616"/>
    </ligand>
</feature>
<proteinExistence type="inferred from homology"/>
<comment type="function">
    <text evidence="1">Is required not only for elongation of protein synthesis but also for the initiation of all mRNA translation through initiator tRNA(fMet) aminoacylation.</text>
</comment>
<comment type="catalytic activity">
    <reaction evidence="1">
        <text>tRNA(Met) + L-methionine + ATP = L-methionyl-tRNA(Met) + AMP + diphosphate</text>
        <dbReference type="Rhea" id="RHEA:13481"/>
        <dbReference type="Rhea" id="RHEA-COMP:9667"/>
        <dbReference type="Rhea" id="RHEA-COMP:9698"/>
        <dbReference type="ChEBI" id="CHEBI:30616"/>
        <dbReference type="ChEBI" id="CHEBI:33019"/>
        <dbReference type="ChEBI" id="CHEBI:57844"/>
        <dbReference type="ChEBI" id="CHEBI:78442"/>
        <dbReference type="ChEBI" id="CHEBI:78530"/>
        <dbReference type="ChEBI" id="CHEBI:456215"/>
        <dbReference type="EC" id="6.1.1.10"/>
    </reaction>
</comment>
<comment type="cofactor">
    <cofactor evidence="1">
        <name>Zn(2+)</name>
        <dbReference type="ChEBI" id="CHEBI:29105"/>
    </cofactor>
    <text evidence="1">Binds 1 zinc ion per subunit.</text>
</comment>
<comment type="subunit">
    <text evidence="1">Homodimer.</text>
</comment>
<comment type="subcellular location">
    <subcellularLocation>
        <location evidence="1">Cytoplasm</location>
    </subcellularLocation>
</comment>
<comment type="similarity">
    <text evidence="1">Belongs to the class-I aminoacyl-tRNA synthetase family. MetG type 1 subfamily.</text>
</comment>
<keyword id="KW-0030">Aminoacyl-tRNA synthetase</keyword>
<keyword id="KW-0067">ATP-binding</keyword>
<keyword id="KW-0963">Cytoplasm</keyword>
<keyword id="KW-0436">Ligase</keyword>
<keyword id="KW-0479">Metal-binding</keyword>
<keyword id="KW-0547">Nucleotide-binding</keyword>
<keyword id="KW-0648">Protein biosynthesis</keyword>
<keyword id="KW-1185">Reference proteome</keyword>
<keyword id="KW-0694">RNA-binding</keyword>
<keyword id="KW-0820">tRNA-binding</keyword>
<keyword id="KW-0862">Zinc</keyword>
<sequence length="710" mass="79167">MSNPLPRKLFVTTALPYANGAFHIGHIMEYIQADIWVRFQRMQGNQVDFVGADDAHGAPIMIAAEKAGLTPQQFVSNIAAGRKQYLDGFHIAFDNWSSTDSPENHQLAQQIYLDLKKAGLIASKTVEQFFDPEKNMFLPDRYIKGECPKCHTKDQYGDNCEVCAAVYSPTDLINPYSALTGATPVLKHSEHFFFTLSDPRCVAFLEEWVSGLDTDGKTHLQAEVANKVKEWFSARTNPDGTISEGLNDWDISRDAPYFGIEIPDAPGKYFYVWLDAPVGYLASLKNLLDKRGENFDAYMAEPALEQIHFIGKDIVNFHTLFWPAMLKFSGRKTPNKVFVHGFLTVNNGEKMSKSRGTGLDPLKYLSLGMNPEWLRYYLANKLSARNEDIDFNPEDFIARVNSDLIGKYVNIASRAAGFIAKKFDGRVVSDWATADDVFISKLRNVASEIQALYDQREYGKALRTIMEQADAINAYVDANKPWELAKKPENSAALQEVCSRLLEAFRILTIYLKPVLPELAKQVEALLNIAPLQWSDVGTPLPHNHQVNPYSHLMTRVEPKMLDALFDMPAVVDVTVNVPNGTSETEVAADSTIEAIAPEIKIDDFAKIDLRIAKIVNCEHVEGSDKLLRLTLDMGEGRLRNVFSGIKSAYQPEDLIGKLTVMVANLAPRKMKFGISEGMVLAASAADEKSNPGIYILNPWPGAEPGMRVG</sequence>
<dbReference type="EC" id="6.1.1.10" evidence="1"/>
<dbReference type="EMBL" id="CU207211">
    <property type="protein sequence ID" value="CAL61163.1"/>
    <property type="molecule type" value="Genomic_DNA"/>
</dbReference>
<dbReference type="SMR" id="A4G3S6"/>
<dbReference type="STRING" id="204773.HEAR0980"/>
<dbReference type="KEGG" id="har:HEAR0980"/>
<dbReference type="eggNOG" id="COG0073">
    <property type="taxonomic scope" value="Bacteria"/>
</dbReference>
<dbReference type="eggNOG" id="COG0143">
    <property type="taxonomic scope" value="Bacteria"/>
</dbReference>
<dbReference type="HOGENOM" id="CLU_009710_7_0_4"/>
<dbReference type="OrthoDB" id="9810191at2"/>
<dbReference type="Proteomes" id="UP000006697">
    <property type="component" value="Chromosome"/>
</dbReference>
<dbReference type="GO" id="GO:0005829">
    <property type="term" value="C:cytosol"/>
    <property type="evidence" value="ECO:0007669"/>
    <property type="project" value="TreeGrafter"/>
</dbReference>
<dbReference type="GO" id="GO:0005524">
    <property type="term" value="F:ATP binding"/>
    <property type="evidence" value="ECO:0007669"/>
    <property type="project" value="UniProtKB-UniRule"/>
</dbReference>
<dbReference type="GO" id="GO:0046872">
    <property type="term" value="F:metal ion binding"/>
    <property type="evidence" value="ECO:0007669"/>
    <property type="project" value="UniProtKB-KW"/>
</dbReference>
<dbReference type="GO" id="GO:0004825">
    <property type="term" value="F:methionine-tRNA ligase activity"/>
    <property type="evidence" value="ECO:0007669"/>
    <property type="project" value="UniProtKB-UniRule"/>
</dbReference>
<dbReference type="GO" id="GO:0000049">
    <property type="term" value="F:tRNA binding"/>
    <property type="evidence" value="ECO:0007669"/>
    <property type="project" value="UniProtKB-KW"/>
</dbReference>
<dbReference type="GO" id="GO:0006431">
    <property type="term" value="P:methionyl-tRNA aminoacylation"/>
    <property type="evidence" value="ECO:0007669"/>
    <property type="project" value="UniProtKB-UniRule"/>
</dbReference>
<dbReference type="CDD" id="cd07957">
    <property type="entry name" value="Anticodon_Ia_Met"/>
    <property type="match status" value="1"/>
</dbReference>
<dbReference type="CDD" id="cd00814">
    <property type="entry name" value="MetRS_core"/>
    <property type="match status" value="1"/>
</dbReference>
<dbReference type="CDD" id="cd02800">
    <property type="entry name" value="tRNA_bind_EcMetRS_like"/>
    <property type="match status" value="1"/>
</dbReference>
<dbReference type="FunFam" id="2.20.28.20:FF:000001">
    <property type="entry name" value="Methionine--tRNA ligase"/>
    <property type="match status" value="1"/>
</dbReference>
<dbReference type="FunFam" id="2.40.50.140:FF:000042">
    <property type="entry name" value="Methionine--tRNA ligase"/>
    <property type="match status" value="1"/>
</dbReference>
<dbReference type="Gene3D" id="3.40.50.620">
    <property type="entry name" value="HUPs"/>
    <property type="match status" value="1"/>
</dbReference>
<dbReference type="Gene3D" id="1.10.730.10">
    <property type="entry name" value="Isoleucyl-tRNA Synthetase, Domain 1"/>
    <property type="match status" value="1"/>
</dbReference>
<dbReference type="Gene3D" id="2.20.28.20">
    <property type="entry name" value="Methionyl-tRNA synthetase, Zn-domain"/>
    <property type="match status" value="1"/>
</dbReference>
<dbReference type="Gene3D" id="2.40.50.140">
    <property type="entry name" value="Nucleic acid-binding proteins"/>
    <property type="match status" value="1"/>
</dbReference>
<dbReference type="HAMAP" id="MF_00098">
    <property type="entry name" value="Met_tRNA_synth_type1"/>
    <property type="match status" value="1"/>
</dbReference>
<dbReference type="InterPro" id="IPR001412">
    <property type="entry name" value="aa-tRNA-synth_I_CS"/>
</dbReference>
<dbReference type="InterPro" id="IPR041872">
    <property type="entry name" value="Anticodon_Met"/>
</dbReference>
<dbReference type="InterPro" id="IPR013155">
    <property type="entry name" value="M/V/L/I-tRNA-synth_anticd-bd"/>
</dbReference>
<dbReference type="InterPro" id="IPR004495">
    <property type="entry name" value="Met-tRNA-synth_bsu_C"/>
</dbReference>
<dbReference type="InterPro" id="IPR023458">
    <property type="entry name" value="Met-tRNA_ligase_1"/>
</dbReference>
<dbReference type="InterPro" id="IPR014758">
    <property type="entry name" value="Met-tRNA_synth"/>
</dbReference>
<dbReference type="InterPro" id="IPR015413">
    <property type="entry name" value="Methionyl/Leucyl_tRNA_Synth"/>
</dbReference>
<dbReference type="InterPro" id="IPR033911">
    <property type="entry name" value="MetRS_core"/>
</dbReference>
<dbReference type="InterPro" id="IPR029038">
    <property type="entry name" value="MetRS_Zn"/>
</dbReference>
<dbReference type="InterPro" id="IPR012340">
    <property type="entry name" value="NA-bd_OB-fold"/>
</dbReference>
<dbReference type="InterPro" id="IPR014729">
    <property type="entry name" value="Rossmann-like_a/b/a_fold"/>
</dbReference>
<dbReference type="InterPro" id="IPR002547">
    <property type="entry name" value="tRNA-bd_dom"/>
</dbReference>
<dbReference type="InterPro" id="IPR009080">
    <property type="entry name" value="tRNAsynth_Ia_anticodon-bd"/>
</dbReference>
<dbReference type="NCBIfam" id="TIGR00398">
    <property type="entry name" value="metG"/>
    <property type="match status" value="1"/>
</dbReference>
<dbReference type="NCBIfam" id="TIGR00399">
    <property type="entry name" value="metG_C_term"/>
    <property type="match status" value="1"/>
</dbReference>
<dbReference type="NCBIfam" id="NF001100">
    <property type="entry name" value="PRK00133.1"/>
    <property type="match status" value="1"/>
</dbReference>
<dbReference type="PANTHER" id="PTHR45765">
    <property type="entry name" value="METHIONINE--TRNA LIGASE"/>
    <property type="match status" value="1"/>
</dbReference>
<dbReference type="PANTHER" id="PTHR45765:SF1">
    <property type="entry name" value="METHIONINE--TRNA LIGASE, CYTOPLASMIC"/>
    <property type="match status" value="1"/>
</dbReference>
<dbReference type="Pfam" id="PF08264">
    <property type="entry name" value="Anticodon_1"/>
    <property type="match status" value="1"/>
</dbReference>
<dbReference type="Pfam" id="PF09334">
    <property type="entry name" value="tRNA-synt_1g"/>
    <property type="match status" value="1"/>
</dbReference>
<dbReference type="Pfam" id="PF01588">
    <property type="entry name" value="tRNA_bind"/>
    <property type="match status" value="1"/>
</dbReference>
<dbReference type="PRINTS" id="PR01041">
    <property type="entry name" value="TRNASYNTHMET"/>
</dbReference>
<dbReference type="SUPFAM" id="SSF47323">
    <property type="entry name" value="Anticodon-binding domain of a subclass of class I aminoacyl-tRNA synthetases"/>
    <property type="match status" value="1"/>
</dbReference>
<dbReference type="SUPFAM" id="SSF57770">
    <property type="entry name" value="Methionyl-tRNA synthetase (MetRS), Zn-domain"/>
    <property type="match status" value="1"/>
</dbReference>
<dbReference type="SUPFAM" id="SSF50249">
    <property type="entry name" value="Nucleic acid-binding proteins"/>
    <property type="match status" value="1"/>
</dbReference>
<dbReference type="SUPFAM" id="SSF52374">
    <property type="entry name" value="Nucleotidylyl transferase"/>
    <property type="match status" value="1"/>
</dbReference>
<dbReference type="PROSITE" id="PS00178">
    <property type="entry name" value="AA_TRNA_LIGASE_I"/>
    <property type="match status" value="1"/>
</dbReference>
<dbReference type="PROSITE" id="PS50886">
    <property type="entry name" value="TRBD"/>
    <property type="match status" value="1"/>
</dbReference>
<organism>
    <name type="scientific">Herminiimonas arsenicoxydans</name>
    <dbReference type="NCBI Taxonomy" id="204773"/>
    <lineage>
        <taxon>Bacteria</taxon>
        <taxon>Pseudomonadati</taxon>
        <taxon>Pseudomonadota</taxon>
        <taxon>Betaproteobacteria</taxon>
        <taxon>Burkholderiales</taxon>
        <taxon>Oxalobacteraceae</taxon>
        <taxon>Herminiimonas</taxon>
    </lineage>
</organism>
<evidence type="ECO:0000255" key="1">
    <source>
        <dbReference type="HAMAP-Rule" id="MF_00098"/>
    </source>
</evidence>
<gene>
    <name evidence="1" type="primary">metG</name>
    <name type="ordered locus">HEAR0980</name>
</gene>
<name>SYM_HERAR</name>
<accession>A4G3S6</accession>
<protein>
    <recommendedName>
        <fullName evidence="1">Methionine--tRNA ligase</fullName>
        <ecNumber evidence="1">6.1.1.10</ecNumber>
    </recommendedName>
    <alternativeName>
        <fullName evidence="1">Methionyl-tRNA synthetase</fullName>
        <shortName evidence="1">MetRS</shortName>
    </alternativeName>
</protein>